<gene>
    <name type="primary">FOXRED1</name>
</gene>
<organism>
    <name type="scientific">Bos taurus</name>
    <name type="common">Bovine</name>
    <dbReference type="NCBI Taxonomy" id="9913"/>
    <lineage>
        <taxon>Eukaryota</taxon>
        <taxon>Metazoa</taxon>
        <taxon>Chordata</taxon>
        <taxon>Craniata</taxon>
        <taxon>Vertebrata</taxon>
        <taxon>Euteleostomi</taxon>
        <taxon>Mammalia</taxon>
        <taxon>Eutheria</taxon>
        <taxon>Laurasiatheria</taxon>
        <taxon>Artiodactyla</taxon>
        <taxon>Ruminantia</taxon>
        <taxon>Pecora</taxon>
        <taxon>Bovidae</taxon>
        <taxon>Bovinae</taxon>
        <taxon>Bos</taxon>
    </lineage>
</organism>
<name>FXRD1_BOVIN</name>
<sequence length="486" mass="54082">MLRRALRLRLGPCLSGRGLGTYRRGSTLDWDGKVSEIKKKIQSIFPGGAWNPLYDTSHLPPERSDVVIVGGGVLGLSVAYWLKRLEKQQGAIRVLVVERDHTYARASTVLSVGGIRQQFSLPQNVQLSLFSAEFLRNINEYLAVVDDPPLDLQFNPSGYLLLASEEGAAIMERNVKMQRQEGAKVCLMSPEQLQKKFPWINTEGVALASYGLENEGWFDPWCLLQGLRRKLQSMGVLFCQGEVTRFISSSSHMETASGEQLTLKRIHEVHVKMDHSQEFQPVECAIVVNAAGAWSGQIAELAGVGNGPPGTMQGTKLPVEPRKRYVYLWHCPQGPGLEAPLVADPSGAYFRREGLGNNYVGSCSPTEEEEPDPGNLEVDYDFFQEKVWPRLAQRVPAFETLKVRSAWAGYYDYNTFDQNGVVGPHPLVVNMYFATGFSGHGLQQAPAVGRAVAEMVLEGHFQTINLSPFLFSRFYFGEKAQEHCIL</sequence>
<feature type="chain" id="PRO_0000274141" description="FAD-dependent oxidoreductase domain-containing protein 1">
    <location>
        <begin position="1"/>
        <end position="486"/>
    </location>
</feature>
<feature type="transmembrane region" description="Helical" evidence="3">
    <location>
        <begin position="66"/>
        <end position="82"/>
    </location>
</feature>
<feature type="splice variant" id="VSP_022627" description="In isoform 2." evidence="4">
    <original>EEEPDPGN</original>
    <variation>PLPTKGTN</variation>
    <location>
        <begin position="368"/>
        <end position="375"/>
    </location>
</feature>
<feature type="splice variant" id="VSP_022628" description="In isoform 2." evidence="4">
    <location>
        <begin position="376"/>
        <end position="486"/>
    </location>
</feature>
<feature type="sequence conflict" description="In Ref. 1; AAX08683." evidence="5" ref="1">
    <original>P</original>
    <variation>S</variation>
    <location>
        <position position="345"/>
    </location>
</feature>
<feature type="sequence conflict" description="In Ref. 1; AAX08683." evidence="5" ref="1">
    <original>V</original>
    <variation>L</variation>
    <location>
        <position position="360"/>
    </location>
</feature>
<protein>
    <recommendedName>
        <fullName>FAD-dependent oxidoreductase domain-containing protein 1</fullName>
        <ecNumber>1.-.-.-</ecNumber>
    </recommendedName>
</protein>
<proteinExistence type="evidence at transcript level"/>
<comment type="function">
    <text evidence="2">Required for the assembly of the mitochondrial membrane respiratory chain NADH dehydrogenase (Complex I). Involved in mid-late stages of complex I assembly.</text>
</comment>
<comment type="cofactor">
    <cofactor evidence="1">
        <name>FAD</name>
        <dbReference type="ChEBI" id="CHEBI:57692"/>
    </cofactor>
</comment>
<comment type="subunit">
    <text evidence="2">Associates with components of the mitochondrial respiratory chain complex I.</text>
</comment>
<comment type="subcellular location">
    <subcellularLocation>
        <location evidence="2">Mitochondrion inner membrane</location>
        <topology evidence="3">Single-pass membrane protein</topology>
    </subcellularLocation>
</comment>
<comment type="alternative products">
    <event type="alternative splicing"/>
    <isoform>
        <id>Q5EA45-1</id>
        <name>1</name>
        <sequence type="displayed"/>
    </isoform>
    <isoform>
        <id>Q5EA45-2</id>
        <name>2</name>
        <sequence type="described" ref="VSP_022627 VSP_022628"/>
    </isoform>
</comment>
<evidence type="ECO:0000250" key="1"/>
<evidence type="ECO:0000250" key="2">
    <source>
        <dbReference type="UniProtKB" id="Q96CU9"/>
    </source>
</evidence>
<evidence type="ECO:0000255" key="3"/>
<evidence type="ECO:0000303" key="4">
    <source>
    </source>
</evidence>
<evidence type="ECO:0000305" key="5"/>
<keyword id="KW-0025">Alternative splicing</keyword>
<keyword id="KW-0249">Electron transport</keyword>
<keyword id="KW-0274">FAD</keyword>
<keyword id="KW-0285">Flavoprotein</keyword>
<keyword id="KW-0472">Membrane</keyword>
<keyword id="KW-0496">Mitochondrion</keyword>
<keyword id="KW-0999">Mitochondrion inner membrane</keyword>
<keyword id="KW-0560">Oxidoreductase</keyword>
<keyword id="KW-1185">Reference proteome</keyword>
<keyword id="KW-0679">Respiratory chain</keyword>
<keyword id="KW-0812">Transmembrane</keyword>
<keyword id="KW-1133">Transmembrane helix</keyword>
<keyword id="KW-0813">Transport</keyword>
<dbReference type="EC" id="1.-.-.-"/>
<dbReference type="EMBL" id="BT020666">
    <property type="protein sequence ID" value="AAX08683.1"/>
    <property type="molecule type" value="mRNA"/>
</dbReference>
<dbReference type="EMBL" id="BT020724">
    <property type="protein sequence ID" value="AAX08741.1"/>
    <property type="molecule type" value="mRNA"/>
</dbReference>
<dbReference type="EMBL" id="BT021902">
    <property type="protein sequence ID" value="AAX46749.1"/>
    <property type="molecule type" value="mRNA"/>
</dbReference>
<dbReference type="EMBL" id="BC120036">
    <property type="protein sequence ID" value="AAI20037.1"/>
    <property type="molecule type" value="mRNA"/>
</dbReference>
<dbReference type="RefSeq" id="NP_001029543.2">
    <molecule id="Q5EA45-1"/>
    <property type="nucleotide sequence ID" value="NM_001034371.3"/>
</dbReference>
<dbReference type="SMR" id="Q5EA45"/>
<dbReference type="FunCoup" id="Q5EA45">
    <property type="interactions" value="1915"/>
</dbReference>
<dbReference type="STRING" id="9913.ENSBTAP00000030261"/>
<dbReference type="PaxDb" id="9913-ENSBTAP00000030261"/>
<dbReference type="GeneID" id="510097"/>
<dbReference type="KEGG" id="bta:510097"/>
<dbReference type="CTD" id="55572"/>
<dbReference type="eggNOG" id="KOG2853">
    <property type="taxonomic scope" value="Eukaryota"/>
</dbReference>
<dbReference type="HOGENOM" id="CLU_007884_4_4_1"/>
<dbReference type="InParanoid" id="Q5EA45"/>
<dbReference type="OrthoDB" id="424974at2759"/>
<dbReference type="TreeFam" id="TF314003"/>
<dbReference type="Proteomes" id="UP000009136">
    <property type="component" value="Unplaced"/>
</dbReference>
<dbReference type="GO" id="GO:0005737">
    <property type="term" value="C:cytoplasm"/>
    <property type="evidence" value="ECO:0000318"/>
    <property type="project" value="GO_Central"/>
</dbReference>
<dbReference type="GO" id="GO:0005743">
    <property type="term" value="C:mitochondrial inner membrane"/>
    <property type="evidence" value="ECO:0000250"/>
    <property type="project" value="UniProtKB"/>
</dbReference>
<dbReference type="GO" id="GO:0016491">
    <property type="term" value="F:oxidoreductase activity"/>
    <property type="evidence" value="ECO:0007669"/>
    <property type="project" value="UniProtKB-KW"/>
</dbReference>
<dbReference type="GO" id="GO:0032981">
    <property type="term" value="P:mitochondrial respiratory chain complex I assembly"/>
    <property type="evidence" value="ECO:0000250"/>
    <property type="project" value="UniProtKB"/>
</dbReference>
<dbReference type="FunFam" id="3.30.9.10:FF:000155">
    <property type="entry name" value="FAD-dependent oxidoreductase domain-containing 1"/>
    <property type="match status" value="1"/>
</dbReference>
<dbReference type="Gene3D" id="3.30.9.10">
    <property type="entry name" value="D-Amino Acid Oxidase, subunit A, domain 2"/>
    <property type="match status" value="1"/>
</dbReference>
<dbReference type="Gene3D" id="3.50.50.60">
    <property type="entry name" value="FAD/NAD(P)-binding domain"/>
    <property type="match status" value="1"/>
</dbReference>
<dbReference type="InterPro" id="IPR006076">
    <property type="entry name" value="FAD-dep_OxRdtase"/>
</dbReference>
<dbReference type="InterPro" id="IPR036188">
    <property type="entry name" value="FAD/NAD-bd_sf"/>
</dbReference>
<dbReference type="PANTHER" id="PTHR13847:SF287">
    <property type="entry name" value="FAD-DEPENDENT OXIDOREDUCTASE DOMAIN-CONTAINING PROTEIN 1"/>
    <property type="match status" value="1"/>
</dbReference>
<dbReference type="PANTHER" id="PTHR13847">
    <property type="entry name" value="SARCOSINE DEHYDROGENASE-RELATED"/>
    <property type="match status" value="1"/>
</dbReference>
<dbReference type="Pfam" id="PF01266">
    <property type="entry name" value="DAO"/>
    <property type="match status" value="1"/>
</dbReference>
<dbReference type="SUPFAM" id="SSF51905">
    <property type="entry name" value="FAD/NAD(P)-binding domain"/>
    <property type="match status" value="1"/>
</dbReference>
<reference key="1">
    <citation type="journal article" date="2005" name="BMC Genomics">
        <title>Characterization of 954 bovine full-CDS cDNA sequences.</title>
        <authorList>
            <person name="Harhay G.P."/>
            <person name="Sonstegard T.S."/>
            <person name="Keele J.W."/>
            <person name="Heaton M.P."/>
            <person name="Clawson M.L."/>
            <person name="Snelling W.M."/>
            <person name="Wiedmann R.T."/>
            <person name="Van Tassell C.P."/>
            <person name="Smith T.P.L."/>
        </authorList>
    </citation>
    <scope>NUCLEOTIDE SEQUENCE [LARGE SCALE MRNA] (ISOFORMS 1 AND 2)</scope>
</reference>
<reference key="2">
    <citation type="submission" date="2006-08" db="EMBL/GenBank/DDBJ databases">
        <authorList>
            <consortium name="NIH - Mammalian Gene Collection (MGC) project"/>
        </authorList>
    </citation>
    <scope>NUCLEOTIDE SEQUENCE [LARGE SCALE MRNA] (ISOFORM 1)</scope>
    <source>
        <strain>Hereford</strain>
        <tissue>Fetal liver</tissue>
    </source>
</reference>
<accession>Q5EA45</accession>
<accession>Q58CP5</accession>
<accession>Q5EAA3</accession>